<keyword id="KW-0029">Amino-acid transport</keyword>
<keyword id="KW-0997">Cell inner membrane</keyword>
<keyword id="KW-1003">Cell membrane</keyword>
<keyword id="KW-0472">Membrane</keyword>
<keyword id="KW-0812">Transmembrane</keyword>
<keyword id="KW-1133">Transmembrane helix</keyword>
<keyword id="KW-0813">Transport</keyword>
<reference key="1">
    <citation type="submission" date="2006-09" db="EMBL/GenBank/DDBJ databases">
        <authorList>
            <consortium name="The Klebsiella pneumonia Genome Sequencing Project"/>
            <person name="McClelland M."/>
            <person name="Sanderson E.K."/>
            <person name="Spieth J."/>
            <person name="Clifton W.S."/>
            <person name="Latreille P."/>
            <person name="Sabo A."/>
            <person name="Pepin K."/>
            <person name="Bhonagiri V."/>
            <person name="Porwollik S."/>
            <person name="Ali J."/>
            <person name="Wilson R.K."/>
        </authorList>
    </citation>
    <scope>NUCLEOTIDE SEQUENCE [LARGE SCALE GENOMIC DNA]</scope>
    <source>
        <strain>ATCC 700721 / MGH 78578</strain>
    </source>
</reference>
<accession>A6T515</accession>
<evidence type="ECO:0000250" key="1">
    <source>
        <dbReference type="UniProtKB" id="P38101"/>
    </source>
</evidence>
<evidence type="ECO:0000255" key="2"/>
<evidence type="ECO:0000305" key="3"/>
<sequence length="196" mass="21293">MTPTLISAFLTYTLITALTPGPNNILALSSVTSHGLRRSLRVLAGMSVGFIITMLICAALTFSLVELDSRFTLVLGWIGAAYILWLAWQIAKSKPATGTPSVEPVGFWASLGLQFVNVKIILYGITALSTFVLPVTREPVWLISVSLLLAAIGALGNLCWALAGHLFQRLFLLYGRQLNWMLAALLVYCAVRIVVE</sequence>
<gene>
    <name type="primary">eamB</name>
    <name type="ordered locus">KPN78578_02250</name>
    <name type="ORF">KPN_00233</name>
</gene>
<feature type="chain" id="PRO_0000318727" description="Cysteine/O-acetylserine efflux protein">
    <location>
        <begin position="1"/>
        <end position="196"/>
    </location>
</feature>
<feature type="transmembrane region" description="Helical" evidence="2">
    <location>
        <begin position="1"/>
        <end position="21"/>
    </location>
</feature>
<feature type="topological domain" description="Cytoplasmic" evidence="2">
    <location>
        <begin position="22"/>
        <end position="41"/>
    </location>
</feature>
<feature type="transmembrane region" description="Helical" evidence="2">
    <location>
        <begin position="42"/>
        <end position="62"/>
    </location>
</feature>
<feature type="topological domain" description="Periplasmic" evidence="2">
    <location>
        <begin position="63"/>
        <end position="70"/>
    </location>
</feature>
<feature type="transmembrane region" description="Helical" evidence="2">
    <location>
        <begin position="71"/>
        <end position="91"/>
    </location>
</feature>
<feature type="topological domain" description="Cytoplasmic" evidence="2">
    <location>
        <begin position="92"/>
        <end position="114"/>
    </location>
</feature>
<feature type="transmembrane region" description="Helical" evidence="2">
    <location>
        <begin position="115"/>
        <end position="135"/>
    </location>
</feature>
<feature type="topological domain" description="Periplasmic" evidence="2">
    <location>
        <begin position="136"/>
        <end position="139"/>
    </location>
</feature>
<feature type="transmembrane region" description="Helical" evidence="2">
    <location>
        <begin position="140"/>
        <end position="160"/>
    </location>
</feature>
<feature type="topological domain" description="Cytoplasmic" evidence="2">
    <location>
        <begin position="161"/>
        <end position="170"/>
    </location>
</feature>
<feature type="transmembrane region" description="Helical" evidence="2">
    <location>
        <begin position="171"/>
        <end position="191"/>
    </location>
</feature>
<feature type="topological domain" description="Periplasmic" evidence="1">
    <location>
        <begin position="192"/>
        <end position="196"/>
    </location>
</feature>
<protein>
    <recommendedName>
        <fullName evidence="1">Cysteine/O-acetylserine efflux protein</fullName>
    </recommendedName>
</protein>
<name>EAMB_KLEP7</name>
<comment type="function">
    <text evidence="1">Exporter of O-acetylserine (OAS) and cysteine.</text>
</comment>
<comment type="catalytic activity">
    <reaction evidence="1">
        <text>O-acetyl-L-serine(in) = O-acetyl-L-serine(out)</text>
        <dbReference type="Rhea" id="RHEA:29659"/>
        <dbReference type="ChEBI" id="CHEBI:58340"/>
    </reaction>
    <physiologicalReaction direction="left-to-right" evidence="1">
        <dbReference type="Rhea" id="RHEA:29660"/>
    </physiologicalReaction>
</comment>
<comment type="catalytic activity">
    <reaction evidence="1">
        <text>L-cysteine(in) = L-cysteine(out)</text>
        <dbReference type="Rhea" id="RHEA:29655"/>
        <dbReference type="ChEBI" id="CHEBI:35235"/>
    </reaction>
    <physiologicalReaction direction="left-to-right" evidence="1">
        <dbReference type="Rhea" id="RHEA:29656"/>
    </physiologicalReaction>
</comment>
<comment type="subcellular location">
    <subcellularLocation>
        <location evidence="1">Cell inner membrane</location>
        <topology evidence="2">Multi-pass membrane protein</topology>
    </subcellularLocation>
</comment>
<comment type="similarity">
    <text evidence="3">Belongs to the Rht family.</text>
</comment>
<dbReference type="EMBL" id="CP000647">
    <property type="protein sequence ID" value="ABR75686.1"/>
    <property type="molecule type" value="Genomic_DNA"/>
</dbReference>
<dbReference type="RefSeq" id="WP_004178672.1">
    <property type="nucleotide sequence ID" value="NC_009648.1"/>
</dbReference>
<dbReference type="PaxDb" id="272620-KPN_00233"/>
<dbReference type="EnsemblBacteria" id="ABR75686">
    <property type="protein sequence ID" value="ABR75686"/>
    <property type="gene ID" value="KPN_00233"/>
</dbReference>
<dbReference type="KEGG" id="kpn:KPN_00233"/>
<dbReference type="HOGENOM" id="CLU_079569_1_2_6"/>
<dbReference type="Proteomes" id="UP000000265">
    <property type="component" value="Chromosome"/>
</dbReference>
<dbReference type="GO" id="GO:0005886">
    <property type="term" value="C:plasma membrane"/>
    <property type="evidence" value="ECO:0007669"/>
    <property type="project" value="UniProtKB-SubCell"/>
</dbReference>
<dbReference type="GO" id="GO:0015171">
    <property type="term" value="F:amino acid transmembrane transporter activity"/>
    <property type="evidence" value="ECO:0007669"/>
    <property type="project" value="TreeGrafter"/>
</dbReference>
<dbReference type="GO" id="GO:0033228">
    <property type="term" value="P:cysteine export across plasma membrane"/>
    <property type="evidence" value="ECO:0007669"/>
    <property type="project" value="TreeGrafter"/>
</dbReference>
<dbReference type="InterPro" id="IPR001123">
    <property type="entry name" value="LeuE-type"/>
</dbReference>
<dbReference type="NCBIfam" id="NF007653">
    <property type="entry name" value="PRK10323.1"/>
    <property type="match status" value="1"/>
</dbReference>
<dbReference type="PANTHER" id="PTHR30086">
    <property type="entry name" value="ARGININE EXPORTER PROTEIN ARGO"/>
    <property type="match status" value="1"/>
</dbReference>
<dbReference type="PANTHER" id="PTHR30086:SF20">
    <property type="entry name" value="ARGININE EXPORTER PROTEIN ARGO-RELATED"/>
    <property type="match status" value="1"/>
</dbReference>
<dbReference type="Pfam" id="PF01810">
    <property type="entry name" value="LysE"/>
    <property type="match status" value="1"/>
</dbReference>
<organism>
    <name type="scientific">Klebsiella pneumoniae subsp. pneumoniae (strain ATCC 700721 / MGH 78578)</name>
    <dbReference type="NCBI Taxonomy" id="272620"/>
    <lineage>
        <taxon>Bacteria</taxon>
        <taxon>Pseudomonadati</taxon>
        <taxon>Pseudomonadota</taxon>
        <taxon>Gammaproteobacteria</taxon>
        <taxon>Enterobacterales</taxon>
        <taxon>Enterobacteriaceae</taxon>
        <taxon>Klebsiella/Raoultella group</taxon>
        <taxon>Klebsiella</taxon>
        <taxon>Klebsiella pneumoniae complex</taxon>
    </lineage>
</organism>
<proteinExistence type="inferred from homology"/>